<accession>P82333</accession>
<reference evidence="3" key="1">
    <citation type="journal article" date="2000" name="Plant Cell">
        <title>Proteomics of the chloroplast: systematic identification and targeting analysis of lumenal and peripheral thylakoid proteins.</title>
        <authorList>
            <person name="Peltier J.-B."/>
            <person name="Friso G."/>
            <person name="Kalume D.E."/>
            <person name="Roepstorff P."/>
            <person name="Nilsson F."/>
            <person name="Adamska I."/>
            <person name="van Wijk K.J."/>
        </authorList>
    </citation>
    <scope>PROTEIN SEQUENCE</scope>
    <scope>SUBCELLULAR LOCATION</scope>
    <source>
        <strain evidence="1">cv. De Grace</strain>
        <tissue evidence="1">Leaf</tissue>
    </source>
</reference>
<comment type="subcellular location">
    <subcellularLocation>
        <location evidence="1">Plastid</location>
        <location evidence="1">Chloroplast thylakoid</location>
    </subcellularLocation>
</comment>
<comment type="miscellaneous">
    <text evidence="1">On the 2D-gel the determined pI of this protein is: 5.7, its MW is: 28.0 kDa.</text>
</comment>
<name>UT118_PEA</name>
<organism>
    <name type="scientific">Pisum sativum</name>
    <name type="common">Garden pea</name>
    <name type="synonym">Lathyrus oleraceus</name>
    <dbReference type="NCBI Taxonomy" id="3888"/>
    <lineage>
        <taxon>Eukaryota</taxon>
        <taxon>Viridiplantae</taxon>
        <taxon>Streptophyta</taxon>
        <taxon>Embryophyta</taxon>
        <taxon>Tracheophyta</taxon>
        <taxon>Spermatophyta</taxon>
        <taxon>Magnoliopsida</taxon>
        <taxon>eudicotyledons</taxon>
        <taxon>Gunneridae</taxon>
        <taxon>Pentapetalae</taxon>
        <taxon>rosids</taxon>
        <taxon>fabids</taxon>
        <taxon>Fabales</taxon>
        <taxon>Fabaceae</taxon>
        <taxon>Papilionoideae</taxon>
        <taxon>50 kb inversion clade</taxon>
        <taxon>NPAAA clade</taxon>
        <taxon>Hologalegina</taxon>
        <taxon>IRL clade</taxon>
        <taxon>Fabeae</taxon>
        <taxon>Pisum</taxon>
    </lineage>
</organism>
<protein>
    <recommendedName>
        <fullName>Unknown protein from spot 118 of 2D-PAGE of thylakoid</fullName>
    </recommendedName>
</protein>
<sequence length="14" mass="1723">EEQEQEQEQDTKMA</sequence>
<keyword id="KW-0150">Chloroplast</keyword>
<keyword id="KW-0903">Direct protein sequencing</keyword>
<keyword id="KW-0934">Plastid</keyword>
<keyword id="KW-0793">Thylakoid</keyword>
<proteinExistence type="evidence at protein level"/>
<evidence type="ECO:0000269" key="1">
    <source>
    </source>
</evidence>
<evidence type="ECO:0000303" key="2">
    <source>
    </source>
</evidence>
<evidence type="ECO:0000305" key="3"/>
<dbReference type="GO" id="GO:0009534">
    <property type="term" value="C:chloroplast thylakoid"/>
    <property type="evidence" value="ECO:0007669"/>
    <property type="project" value="UniProtKB-SubCell"/>
</dbReference>
<feature type="chain" id="PRO_0000234477" description="Unknown protein from spot 118 of 2D-PAGE of thylakoid">
    <location>
        <begin position="1"/>
        <end position="14" status="greater than"/>
    </location>
</feature>
<feature type="non-terminal residue" evidence="2">
    <location>
        <position position="14"/>
    </location>
</feature>